<evidence type="ECO:0000255" key="1">
    <source>
        <dbReference type="HAMAP-Rule" id="MF_00041"/>
    </source>
</evidence>
<comment type="catalytic activity">
    <reaction evidence="1">
        <text>tRNA(Cys) + L-cysteine + ATP = L-cysteinyl-tRNA(Cys) + AMP + diphosphate</text>
        <dbReference type="Rhea" id="RHEA:17773"/>
        <dbReference type="Rhea" id="RHEA-COMP:9661"/>
        <dbReference type="Rhea" id="RHEA-COMP:9679"/>
        <dbReference type="ChEBI" id="CHEBI:30616"/>
        <dbReference type="ChEBI" id="CHEBI:33019"/>
        <dbReference type="ChEBI" id="CHEBI:35235"/>
        <dbReference type="ChEBI" id="CHEBI:78442"/>
        <dbReference type="ChEBI" id="CHEBI:78517"/>
        <dbReference type="ChEBI" id="CHEBI:456215"/>
        <dbReference type="EC" id="6.1.1.16"/>
    </reaction>
</comment>
<comment type="cofactor">
    <cofactor evidence="1">
        <name>Zn(2+)</name>
        <dbReference type="ChEBI" id="CHEBI:29105"/>
    </cofactor>
    <text evidence="1">Binds 1 zinc ion per subunit.</text>
</comment>
<comment type="subunit">
    <text evidence="1">Monomer.</text>
</comment>
<comment type="subcellular location">
    <subcellularLocation>
        <location evidence="1">Cytoplasm</location>
    </subcellularLocation>
</comment>
<comment type="similarity">
    <text evidence="1">Belongs to the class-I aminoacyl-tRNA synthetase family.</text>
</comment>
<sequence length="460" mass="50377">MSLRIYNTLSRALEEFSPLEPGHVRMYVCGMTIYDLCHIGHARMMMAFDVVQRWLKARGLKVTYVRNITDIDDKIIGRALERGITIGALTDEMIAAMHADIGALGLEPPTLEPRATQYVPRMLALIGQLQAKGLAYRASNGDVNYAVRKFQGYGKLSGKSPDELRAGARVALADGKTDPLDFVLWKSAKPHEPPEAQWDSDYGRGRPGWHIECSAMSCATLGESFDIHGGGADLQFPHHENEIAQSEGVTGKPLARFWLHNGFVRVDNEKMSKSLGNFFTIRDVLAQYDAQTVRFFIVRAHYRSALNYSDAHLDDARQALKRLYTALSLVPPAPVAAIDWTEPHAARFQAAMDEDFGTPEAVAVLFDLAVEVNKSHSPQRAGLLKALGGCLGLLQGDPRAFLQAGAGTPDEADIQARIAARAAAKAQRDFAEADRIRNALLAQGIVLKDGATGTTWEAAQ</sequence>
<gene>
    <name evidence="1" type="primary">cysS</name>
    <name type="ordered locus">Veis_4936</name>
</gene>
<protein>
    <recommendedName>
        <fullName evidence="1">Cysteine--tRNA ligase</fullName>
        <ecNumber evidence="1">6.1.1.16</ecNumber>
    </recommendedName>
    <alternativeName>
        <fullName evidence="1">Cysteinyl-tRNA synthetase</fullName>
        <shortName evidence="1">CysRS</shortName>
    </alternativeName>
</protein>
<reference key="1">
    <citation type="submission" date="2006-12" db="EMBL/GenBank/DDBJ databases">
        <title>Complete sequence of chromosome 1 of Verminephrobacter eiseniae EF01-2.</title>
        <authorList>
            <person name="Copeland A."/>
            <person name="Lucas S."/>
            <person name="Lapidus A."/>
            <person name="Barry K."/>
            <person name="Detter J.C."/>
            <person name="Glavina del Rio T."/>
            <person name="Dalin E."/>
            <person name="Tice H."/>
            <person name="Pitluck S."/>
            <person name="Chertkov O."/>
            <person name="Brettin T."/>
            <person name="Bruce D."/>
            <person name="Han C."/>
            <person name="Tapia R."/>
            <person name="Gilna P."/>
            <person name="Schmutz J."/>
            <person name="Larimer F."/>
            <person name="Land M."/>
            <person name="Hauser L."/>
            <person name="Kyrpides N."/>
            <person name="Kim E."/>
            <person name="Stahl D."/>
            <person name="Richardson P."/>
        </authorList>
    </citation>
    <scope>NUCLEOTIDE SEQUENCE [LARGE SCALE GENOMIC DNA]</scope>
    <source>
        <strain>EF01-2</strain>
    </source>
</reference>
<proteinExistence type="inferred from homology"/>
<organism>
    <name type="scientific">Verminephrobacter eiseniae (strain EF01-2)</name>
    <dbReference type="NCBI Taxonomy" id="391735"/>
    <lineage>
        <taxon>Bacteria</taxon>
        <taxon>Pseudomonadati</taxon>
        <taxon>Pseudomonadota</taxon>
        <taxon>Betaproteobacteria</taxon>
        <taxon>Burkholderiales</taxon>
        <taxon>Comamonadaceae</taxon>
        <taxon>Verminephrobacter</taxon>
    </lineage>
</organism>
<dbReference type="EC" id="6.1.1.16" evidence="1"/>
<dbReference type="EMBL" id="CP000542">
    <property type="protein sequence ID" value="ABM60623.1"/>
    <property type="molecule type" value="Genomic_DNA"/>
</dbReference>
<dbReference type="RefSeq" id="WP_011812601.1">
    <property type="nucleotide sequence ID" value="NC_008786.1"/>
</dbReference>
<dbReference type="SMR" id="A1WSL6"/>
<dbReference type="STRING" id="391735.Veis_4936"/>
<dbReference type="GeneID" id="76463195"/>
<dbReference type="KEGG" id="vei:Veis_4936"/>
<dbReference type="eggNOG" id="COG0215">
    <property type="taxonomic scope" value="Bacteria"/>
</dbReference>
<dbReference type="HOGENOM" id="CLU_013528_0_1_4"/>
<dbReference type="OrthoDB" id="9815130at2"/>
<dbReference type="Proteomes" id="UP000000374">
    <property type="component" value="Chromosome"/>
</dbReference>
<dbReference type="GO" id="GO:0005829">
    <property type="term" value="C:cytosol"/>
    <property type="evidence" value="ECO:0007669"/>
    <property type="project" value="TreeGrafter"/>
</dbReference>
<dbReference type="GO" id="GO:0005524">
    <property type="term" value="F:ATP binding"/>
    <property type="evidence" value="ECO:0007669"/>
    <property type="project" value="UniProtKB-UniRule"/>
</dbReference>
<dbReference type="GO" id="GO:0004817">
    <property type="term" value="F:cysteine-tRNA ligase activity"/>
    <property type="evidence" value="ECO:0007669"/>
    <property type="project" value="UniProtKB-UniRule"/>
</dbReference>
<dbReference type="GO" id="GO:0008270">
    <property type="term" value="F:zinc ion binding"/>
    <property type="evidence" value="ECO:0007669"/>
    <property type="project" value="UniProtKB-UniRule"/>
</dbReference>
<dbReference type="GO" id="GO:0006423">
    <property type="term" value="P:cysteinyl-tRNA aminoacylation"/>
    <property type="evidence" value="ECO:0007669"/>
    <property type="project" value="UniProtKB-UniRule"/>
</dbReference>
<dbReference type="CDD" id="cd00672">
    <property type="entry name" value="CysRS_core"/>
    <property type="match status" value="1"/>
</dbReference>
<dbReference type="FunFam" id="3.40.50.620:FF:000009">
    <property type="entry name" value="Cysteine--tRNA ligase"/>
    <property type="match status" value="1"/>
</dbReference>
<dbReference type="Gene3D" id="1.20.120.1910">
    <property type="entry name" value="Cysteine-tRNA ligase, C-terminal anti-codon recognition domain"/>
    <property type="match status" value="1"/>
</dbReference>
<dbReference type="Gene3D" id="3.40.50.620">
    <property type="entry name" value="HUPs"/>
    <property type="match status" value="1"/>
</dbReference>
<dbReference type="HAMAP" id="MF_00041">
    <property type="entry name" value="Cys_tRNA_synth"/>
    <property type="match status" value="1"/>
</dbReference>
<dbReference type="InterPro" id="IPR015803">
    <property type="entry name" value="Cys-tRNA-ligase"/>
</dbReference>
<dbReference type="InterPro" id="IPR015273">
    <property type="entry name" value="Cys-tRNA-synt_Ia_DALR"/>
</dbReference>
<dbReference type="InterPro" id="IPR024909">
    <property type="entry name" value="Cys-tRNA/MSH_ligase"/>
</dbReference>
<dbReference type="InterPro" id="IPR014729">
    <property type="entry name" value="Rossmann-like_a/b/a_fold"/>
</dbReference>
<dbReference type="InterPro" id="IPR032678">
    <property type="entry name" value="tRNA-synt_1_cat_dom"/>
</dbReference>
<dbReference type="InterPro" id="IPR009080">
    <property type="entry name" value="tRNAsynth_Ia_anticodon-bd"/>
</dbReference>
<dbReference type="NCBIfam" id="TIGR00435">
    <property type="entry name" value="cysS"/>
    <property type="match status" value="1"/>
</dbReference>
<dbReference type="PANTHER" id="PTHR10890:SF3">
    <property type="entry name" value="CYSTEINE--TRNA LIGASE, CYTOPLASMIC"/>
    <property type="match status" value="1"/>
</dbReference>
<dbReference type="PANTHER" id="PTHR10890">
    <property type="entry name" value="CYSTEINYL-TRNA SYNTHETASE"/>
    <property type="match status" value="1"/>
</dbReference>
<dbReference type="Pfam" id="PF09190">
    <property type="entry name" value="DALR_2"/>
    <property type="match status" value="1"/>
</dbReference>
<dbReference type="Pfam" id="PF01406">
    <property type="entry name" value="tRNA-synt_1e"/>
    <property type="match status" value="1"/>
</dbReference>
<dbReference type="PRINTS" id="PR00983">
    <property type="entry name" value="TRNASYNTHCYS"/>
</dbReference>
<dbReference type="SMART" id="SM00840">
    <property type="entry name" value="DALR_2"/>
    <property type="match status" value="1"/>
</dbReference>
<dbReference type="SUPFAM" id="SSF47323">
    <property type="entry name" value="Anticodon-binding domain of a subclass of class I aminoacyl-tRNA synthetases"/>
    <property type="match status" value="1"/>
</dbReference>
<dbReference type="SUPFAM" id="SSF52374">
    <property type="entry name" value="Nucleotidylyl transferase"/>
    <property type="match status" value="1"/>
</dbReference>
<accession>A1WSL6</accession>
<keyword id="KW-0030">Aminoacyl-tRNA synthetase</keyword>
<keyword id="KW-0067">ATP-binding</keyword>
<keyword id="KW-0963">Cytoplasm</keyword>
<keyword id="KW-0436">Ligase</keyword>
<keyword id="KW-0479">Metal-binding</keyword>
<keyword id="KW-0547">Nucleotide-binding</keyword>
<keyword id="KW-0648">Protein biosynthesis</keyword>
<keyword id="KW-1185">Reference proteome</keyword>
<keyword id="KW-0862">Zinc</keyword>
<name>SYC_VEREI</name>
<feature type="chain" id="PRO_0000332912" description="Cysteine--tRNA ligase">
    <location>
        <begin position="1"/>
        <end position="460"/>
    </location>
</feature>
<feature type="short sequence motif" description="'HIGH' region">
    <location>
        <begin position="31"/>
        <end position="41"/>
    </location>
</feature>
<feature type="short sequence motif" description="'KMSKS' region">
    <location>
        <begin position="270"/>
        <end position="274"/>
    </location>
</feature>
<feature type="binding site" evidence="1">
    <location>
        <position position="29"/>
    </location>
    <ligand>
        <name>Zn(2+)</name>
        <dbReference type="ChEBI" id="CHEBI:29105"/>
    </ligand>
</feature>
<feature type="binding site" evidence="1">
    <location>
        <position position="213"/>
    </location>
    <ligand>
        <name>Zn(2+)</name>
        <dbReference type="ChEBI" id="CHEBI:29105"/>
    </ligand>
</feature>
<feature type="binding site" evidence="1">
    <location>
        <position position="238"/>
    </location>
    <ligand>
        <name>Zn(2+)</name>
        <dbReference type="ChEBI" id="CHEBI:29105"/>
    </ligand>
</feature>
<feature type="binding site" evidence="1">
    <location>
        <position position="242"/>
    </location>
    <ligand>
        <name>Zn(2+)</name>
        <dbReference type="ChEBI" id="CHEBI:29105"/>
    </ligand>
</feature>
<feature type="binding site" evidence="1">
    <location>
        <position position="273"/>
    </location>
    <ligand>
        <name>ATP</name>
        <dbReference type="ChEBI" id="CHEBI:30616"/>
    </ligand>
</feature>